<name>TONSL_HUMAN</name>
<comment type="function">
    <text evidence="5 6 7 8 9 10 11 12 14">Component of the MMS22L-TONSL complex, a complex that promotes homologous recombination-mediated repair of double-strand breaks (DSBs) at stalled or collapsed replication forks (PubMed:21055983, PubMed:21055984, PubMed:21055985, PubMed:21113133, PubMed:26527279, PubMed:27338793, PubMed:27797818, PubMed:29478807, PubMed:30773278). The MMS22L-TONSL complex is required to maintain genome integrity during DNA replication (PubMed:21055983, PubMed:21055984, PubMed:21055985). It mediates the assembly of RAD51 filaments on single-stranded DNA (ssDNA): the MMS22L-TONSL complex is recruited to DSBs following histone replacement by histone chaperones and eviction of the replication protein A complex (RPA/RP-A) from DSBs (PubMed:21055983, PubMed:21055984, PubMed:21055985, PubMed:27797818, PubMed:29478807). Following recruitment to DSBs, the TONSL-MMS22L complex promotes recruitment of RAD51 filaments and subsequent homologous recombination (PubMed:27797818, PubMed:29478807). Within the complex, TONSL acts as a histone reader, which recognizes and binds newly synthesized histones following their replacement by histone chaperones (PubMed:27338793, PubMed:29478807). Specifically binds histone H4 lacking methylation at 'Lys-20' (H4K20me0) and histone H3.1 (PubMed:27338793).</text>
</comment>
<comment type="subunit">
    <text evidence="5 6 7 8 9 10 16">Component of the MMS22L-TONSL complex, a complex at least composed of MMS22L and TONSL/NFKBIL2 (PubMed:21055983, PubMed:21055984, PubMed:21055985, PubMed:21113133, PubMed:27338793). Interacts with the MCM complex, the FACT complex and the RPA complex (PubMed:21055983, PubMed:21055984, PubMed:26527279). Interacts with MCM5; the interaction is direct (PubMed:26527279). Binds histones, with a strong preference for histone H3.1 (histones H3.1 and H3-4/H3.1t) (PubMed:21055983, PubMed:21055984, PubMed:26527279, PubMed:33857403). Interacts (via ANK repeats) with histone H4; specifically binds histone H4 lacking methylation at 'Lys-20' (H4K20me0) (PubMed:27338793). May interact with DNAJC9; the interaction seems to be histone-dependent (PubMed:33857403).</text>
</comment>
<comment type="interaction">
    <interactant intactId="EBI-1052467">
        <id>Q96HA7</id>
    </interactant>
    <interactant intactId="EBI-718662">
        <id>Q6ZRQ5</id>
        <label>MMS22L</label>
    </interactant>
    <organismsDiffer>false</organismsDiffer>
    <experiments>5</experiments>
</comment>
<comment type="subcellular location">
    <subcellularLocation>
        <location evidence="5 6 18">Nucleus</location>
    </subcellularLocation>
    <subcellularLocation>
        <location evidence="5 6 9 10 12">Chromosome</location>
    </subcellularLocation>
    <subcellularLocation>
        <location evidence="17">Cytoplasm</location>
    </subcellularLocation>
    <text evidence="5 6 9 10 12">Mainly nuclear (PubMed:21055983, PubMed:21055984). Localizes to DNA damage sites, accumulates at stressed replication forks (PubMed:21055983, PubMed:21055984, PubMed:26527279, PubMed:27338793). Recruited to stalled or collapsed replication forks following histone replacement by histone chaperones ASF1A and the CAF-1 complex: TONSL acts as a histone reader that recognizes and binds newly synthesized histones (PubMed:29478807).</text>
</comment>
<comment type="alternative products">
    <event type="alternative splicing"/>
    <isoform>
        <id>Q96HA7-1</id>
        <name>1</name>
        <sequence type="displayed"/>
    </isoform>
    <isoform>
        <id>Q96HA7-2</id>
        <name>2</name>
        <sequence type="described" ref="VSP_032686"/>
    </isoform>
</comment>
<comment type="tissue specificity">
    <text evidence="17">Expressed in heart, skeletal muscle and tracheal epithelial cells.</text>
</comment>
<comment type="domain">
    <text evidence="6">The ANK repeats mediate the interaction with the MCM complex and histones, while the LRR repeats mediate the interaction with MMS22L.</text>
</comment>
<comment type="disease" evidence="13 14 15">
    <disease id="DI-05624">
        <name>Spondyloepimetaphyseal dysplasia, sponastrime type</name>
        <acronym>SEMDSP</acronym>
        <description>An autosomal recessive bone disease characterized by spine abnormalities, mid-face hypoplasia with a depressed nasal bridge, and striation of the metaphyses. Additional features include disproportionate short stature with exaggerated lumbar lordosis, scoliosis, coxa vara, limited elbow extension, small dysplastic epiphyses, childhood cataracts, short dental roots, and hypogammaglobulinemia. Disease severity and clinical manifestations are variable. Some patients have intellectual disability.</description>
        <dbReference type="MIM" id="271510"/>
    </disease>
    <text>The disease is caused by variants affecting the gene represented in this entry.</text>
</comment>
<comment type="similarity">
    <text evidence="21">Belongs to the Tonsoku family.</text>
</comment>
<comment type="caution">
    <text evidence="22 23">Was reported to share sequence similarities with IKBKB and therefore named 'NF-kappa-B inhibitor-like protein 2' (PubMed:7738005). However, the sequence similarity is remote and effects as regulator of NF-kappa-B are probably indirect and require additional evidence (PubMed:9242696).</text>
</comment>
<comment type="sequence caution" evidence="21">
    <conflict type="frameshift">
        <sequence resource="EMBL-CDS" id="AAA85819"/>
    </conflict>
</comment>
<comment type="sequence caution" evidence="21">
    <conflict type="erroneous initiation">
        <sequence resource="EMBL-CDS" id="AAH08782"/>
    </conflict>
    <text>Truncated N-terminus.</text>
</comment>
<comment type="sequence caution" evidence="21">
    <conflict type="erroneous gene model prediction">
        <sequence resource="EMBL-CDS" id="CAB63467"/>
    </conflict>
</comment>
<gene>
    <name evidence="19 24" type="primary">TONSL</name>
    <name evidence="20" type="synonym">IKBR</name>
    <name type="synonym">NFKBIL2</name>
</gene>
<protein>
    <recommendedName>
        <fullName evidence="19">Tonsoku-like protein</fullName>
    </recommendedName>
    <alternativeName>
        <fullName evidence="20">Inhibitor of kappa B-related protein</fullName>
        <shortName evidence="20">I-kappa-B-related protein</shortName>
        <shortName evidence="20">IkappaBR</shortName>
    </alternativeName>
    <alternativeName>
        <fullName>NF-kappa-B inhibitor-like protein 2</fullName>
    </alternativeName>
    <alternativeName>
        <fullName>Nuclear factor of kappa light polypeptide gene enhancer in B-cells inhibitor-like 2</fullName>
    </alternativeName>
</protein>
<accession>Q96HA7</accession>
<accession>B5MDP0</accession>
<accession>C9JKB1</accession>
<accession>C9JNV8</accession>
<accession>Q13006</accession>
<accession>Q9UGJ2</accession>
<proteinExistence type="evidence at protein level"/>
<organism>
    <name type="scientific">Homo sapiens</name>
    <name type="common">Human</name>
    <dbReference type="NCBI Taxonomy" id="9606"/>
    <lineage>
        <taxon>Eukaryota</taxon>
        <taxon>Metazoa</taxon>
        <taxon>Chordata</taxon>
        <taxon>Craniata</taxon>
        <taxon>Vertebrata</taxon>
        <taxon>Euteleostomi</taxon>
        <taxon>Mammalia</taxon>
        <taxon>Eutheria</taxon>
        <taxon>Euarchontoglires</taxon>
        <taxon>Primates</taxon>
        <taxon>Haplorrhini</taxon>
        <taxon>Catarrhini</taxon>
        <taxon>Hominidae</taxon>
        <taxon>Homo</taxon>
    </lineage>
</organism>
<reference key="1">
    <citation type="journal article" date="1995" name="J. Biol. Chem.">
        <title>Cloning of a differentially expressed I kappa B-related protein.</title>
        <authorList>
            <person name="Ray P."/>
            <person name="Zhang D.H."/>
            <person name="Elias J.A."/>
            <person name="Ray A."/>
        </authorList>
    </citation>
    <scope>NUCLEOTIDE SEQUENCE [MRNA] (ISOFORM 2)</scope>
    <scope>SUBCELLULAR LOCATION</scope>
    <scope>TISSUE SPECIFICITY</scope>
    <scope>VARIANT SER-493</scope>
    <source>
        <tissue>Cervix carcinoma</tissue>
    </source>
</reference>
<reference key="2">
    <citation type="journal article" date="2006" name="Nature">
        <title>DNA sequence and analysis of human chromosome 8.</title>
        <authorList>
            <person name="Nusbaum C."/>
            <person name="Mikkelsen T.S."/>
            <person name="Zody M.C."/>
            <person name="Asakawa S."/>
            <person name="Taudien S."/>
            <person name="Garber M."/>
            <person name="Kodira C.D."/>
            <person name="Schueler M.G."/>
            <person name="Shimizu A."/>
            <person name="Whittaker C.A."/>
            <person name="Chang J.L."/>
            <person name="Cuomo C.A."/>
            <person name="Dewar K."/>
            <person name="FitzGerald M.G."/>
            <person name="Yang X."/>
            <person name="Allen N.R."/>
            <person name="Anderson S."/>
            <person name="Asakawa T."/>
            <person name="Blechschmidt K."/>
            <person name="Bloom T."/>
            <person name="Borowsky M.L."/>
            <person name="Butler J."/>
            <person name="Cook A."/>
            <person name="Corum B."/>
            <person name="DeArellano K."/>
            <person name="DeCaprio D."/>
            <person name="Dooley K.T."/>
            <person name="Dorris L. III"/>
            <person name="Engels R."/>
            <person name="Gloeckner G."/>
            <person name="Hafez N."/>
            <person name="Hagopian D.S."/>
            <person name="Hall J.L."/>
            <person name="Ishikawa S.K."/>
            <person name="Jaffe D.B."/>
            <person name="Kamat A."/>
            <person name="Kudoh J."/>
            <person name="Lehmann R."/>
            <person name="Lokitsang T."/>
            <person name="Macdonald P."/>
            <person name="Major J.E."/>
            <person name="Matthews C.D."/>
            <person name="Mauceli E."/>
            <person name="Menzel U."/>
            <person name="Mihalev A.H."/>
            <person name="Minoshima S."/>
            <person name="Murayama Y."/>
            <person name="Naylor J.W."/>
            <person name="Nicol R."/>
            <person name="Nguyen C."/>
            <person name="O'Leary S.B."/>
            <person name="O'Neill K."/>
            <person name="Parker S.C.J."/>
            <person name="Polley A."/>
            <person name="Raymond C.K."/>
            <person name="Reichwald K."/>
            <person name="Rodriguez J."/>
            <person name="Sasaki T."/>
            <person name="Schilhabel M."/>
            <person name="Siddiqui R."/>
            <person name="Smith C.L."/>
            <person name="Sneddon T.P."/>
            <person name="Talamas J.A."/>
            <person name="Tenzin P."/>
            <person name="Topham K."/>
            <person name="Venkataraman V."/>
            <person name="Wen G."/>
            <person name="Yamazaki S."/>
            <person name="Young S.K."/>
            <person name="Zeng Q."/>
            <person name="Zimmer A.R."/>
            <person name="Rosenthal A."/>
            <person name="Birren B.W."/>
            <person name="Platzer M."/>
            <person name="Shimizu N."/>
            <person name="Lander E.S."/>
        </authorList>
    </citation>
    <scope>NUCLEOTIDE SEQUENCE [LARGE SCALE GENOMIC DNA]</scope>
</reference>
<reference key="3">
    <citation type="journal article" date="2004" name="Genome Res.">
        <title>The status, quality, and expansion of the NIH full-length cDNA project: the Mammalian Gene Collection (MGC).</title>
        <authorList>
            <consortium name="The MGC Project Team"/>
        </authorList>
    </citation>
    <scope>NUCLEOTIDE SEQUENCE [LARGE SCALE MRNA] OF 6-1378 (ISOFORM 1)</scope>
    <scope>VARIANT VAL-714</scope>
    <source>
        <tissue>Brain</tissue>
    </source>
</reference>
<reference key="4">
    <citation type="journal article" date="2000" name="Ann. Hum. Genet.">
        <title>Isolation, sequence, and chromosomal localisation of the human IkappaBR gene (NFKBIL2).</title>
        <authorList>
            <person name="Norman D.A."/>
            <person name="Barton P.J."/>
        </authorList>
    </citation>
    <scope>NUCLEOTIDE SEQUENCE [GENOMIC DNA] OF 64-671</scope>
    <scope>VARIANT SER-493</scope>
</reference>
<reference key="5">
    <citation type="journal article" date="1997" name="J. Biol. Chem.">
        <title>Selective up-regulation of cytokine-induced RANTES gene expression in lung epithelial cells by overexpression of IkappaBR.</title>
        <authorList>
            <person name="Ray P."/>
            <person name="Yang L."/>
            <person name="Zhang D.H."/>
            <person name="Ghosh S.K."/>
            <person name="Ray A."/>
        </authorList>
    </citation>
    <scope>SUBCELLULAR LOCATION</scope>
</reference>
<reference key="6">
    <citation type="journal article" date="2008" name="Mol. Cell">
        <title>Kinase-selective enrichment enables quantitative phosphoproteomics of the kinome across the cell cycle.</title>
        <authorList>
            <person name="Daub H."/>
            <person name="Olsen J.V."/>
            <person name="Bairlein M."/>
            <person name="Gnad F."/>
            <person name="Oppermann F.S."/>
            <person name="Korner R."/>
            <person name="Greff Z."/>
            <person name="Keri G."/>
            <person name="Stemmann O."/>
            <person name="Mann M."/>
        </authorList>
    </citation>
    <scope>PHOSPHORYLATION [LARGE SCALE ANALYSIS] AT SER-719</scope>
    <scope>IDENTIFICATION BY MASS SPECTROMETRY [LARGE SCALE ANALYSIS]</scope>
    <source>
        <tissue>Cervix carcinoma</tissue>
    </source>
</reference>
<reference key="7">
    <citation type="journal article" date="2010" name="EMBO J.">
        <title>RNAi-based screening identifies the Mms22L-Nfkbil2 complex as a novel regulator of DNA replication in human cells.</title>
        <authorList>
            <person name="Piwko W."/>
            <person name="Olma M.H."/>
            <person name="Held M."/>
            <person name="Bianco J.N."/>
            <person name="Pedrioli P.G."/>
            <person name="Hofmann K."/>
            <person name="Pasero P."/>
            <person name="Gerlich D.W."/>
            <person name="Peter M."/>
        </authorList>
    </citation>
    <scope>FUNCTION</scope>
    <scope>IDENTIFICATION IN THE MMS22L-TONSL COMPLEX</scope>
</reference>
<reference key="8">
    <citation type="journal article" date="2010" name="Mol. Cell">
        <title>The MMS22L-TONSL complex mediates recovery from replication stress and homologous recombination.</title>
        <authorList>
            <person name="O'Donnell L."/>
            <person name="Panier S."/>
            <person name="Wildenhain J."/>
            <person name="Tkach J.M."/>
            <person name="Al-Hakim A."/>
            <person name="Landry M.C."/>
            <person name="Escribano-Diaz C."/>
            <person name="Szilard R.K."/>
            <person name="Young J.T."/>
            <person name="Munro M."/>
            <person name="Canny M.D."/>
            <person name="Kolas N.K."/>
            <person name="Zhang W."/>
            <person name="Harding S.M."/>
            <person name="Ylanko J."/>
            <person name="Mendez M."/>
            <person name="Mullin M."/>
            <person name="Sun T."/>
            <person name="Habermann B."/>
            <person name="Datti A."/>
            <person name="Bristow R.G."/>
            <person name="Gingras A.C."/>
            <person name="Tyers M.D."/>
            <person name="Brown G.W."/>
            <person name="Durocher D."/>
        </authorList>
    </citation>
    <scope>FUNCTION</scope>
    <scope>SUBCELLULAR LOCATION</scope>
    <scope>IDENTIFICATION IN THE MMS22L-TONSL COMPLEX</scope>
</reference>
<reference key="9">
    <citation type="journal article" date="2010" name="Mol. Cell">
        <title>Identification of the MMS22L-TONSL complex that promotes homologous recombination.</title>
        <authorList>
            <person name="Duro E."/>
            <person name="Lundin C."/>
            <person name="Ask K."/>
            <person name="Sanchez-Pulido L."/>
            <person name="MacArtney T.J."/>
            <person name="Toth R."/>
            <person name="Ponting C.P."/>
            <person name="Groth A."/>
            <person name="Helleday T."/>
            <person name="Rouse J."/>
        </authorList>
    </citation>
    <scope>FUNCTION</scope>
    <scope>SUBCELLULAR LOCATION</scope>
    <scope>IDENTIFICATION IN THE MMS22L-TONSL COMPLEX</scope>
    <scope>DOMAIN</scope>
</reference>
<reference key="10">
    <citation type="journal article" date="2010" name="Mol. Cell">
        <title>A genome-wide camptothecin sensitivity screen identifies a mammalian MMS22L-NFKBIL2 complex required for genomic stability.</title>
        <authorList>
            <person name="O'Connell B.C."/>
            <person name="Adamson B."/>
            <person name="Lydeard J.R."/>
            <person name="Sowa M.E."/>
            <person name="Ciccia A."/>
            <person name="Bredemeyer A.L."/>
            <person name="Schlabach M."/>
            <person name="Gygi S.P."/>
            <person name="Elledge S.J."/>
            <person name="Harper J.W."/>
        </authorList>
    </citation>
    <scope>FUNCTION</scope>
    <scope>IDENTIFICATION IN THE MMS22L-TONSL COMPLEX</scope>
</reference>
<reference key="11">
    <citation type="journal article" date="2010" name="Sci. Signal.">
        <title>Quantitative phosphoproteomics reveals widespread full phosphorylation site occupancy during mitosis.</title>
        <authorList>
            <person name="Olsen J.V."/>
            <person name="Vermeulen M."/>
            <person name="Santamaria A."/>
            <person name="Kumar C."/>
            <person name="Miller M.L."/>
            <person name="Jensen L.J."/>
            <person name="Gnad F."/>
            <person name="Cox J."/>
            <person name="Jensen T.S."/>
            <person name="Nigg E.A."/>
            <person name="Brunak S."/>
            <person name="Mann M."/>
        </authorList>
    </citation>
    <scope>PHOSPHORYLATION [LARGE SCALE ANALYSIS] AT SER-719</scope>
    <scope>IDENTIFICATION BY MASS SPECTROMETRY [LARGE SCALE ANALYSIS]</scope>
    <source>
        <tissue>Cervix carcinoma</tissue>
    </source>
</reference>
<reference key="12">
    <citation type="journal article" date="2011" name="BMC Syst. Biol.">
        <title>Initial characterization of the human central proteome.</title>
        <authorList>
            <person name="Burkard T.R."/>
            <person name="Planyavsky M."/>
            <person name="Kaupe I."/>
            <person name="Breitwieser F.P."/>
            <person name="Buerckstuemmer T."/>
            <person name="Bennett K.L."/>
            <person name="Superti-Furga G."/>
            <person name="Colinge J."/>
        </authorList>
    </citation>
    <scope>IDENTIFICATION BY MASS SPECTROMETRY [LARGE SCALE ANALYSIS]</scope>
</reference>
<reference key="13">
    <citation type="journal article" date="2013" name="J. Proteome Res.">
        <title>Toward a comprehensive characterization of a human cancer cell phosphoproteome.</title>
        <authorList>
            <person name="Zhou H."/>
            <person name="Di Palma S."/>
            <person name="Preisinger C."/>
            <person name="Peng M."/>
            <person name="Polat A.N."/>
            <person name="Heck A.J."/>
            <person name="Mohammed S."/>
        </authorList>
    </citation>
    <scope>PHOSPHORYLATION [LARGE SCALE ANALYSIS] AT SER-719</scope>
    <scope>IDENTIFICATION BY MASS SPECTROMETRY [LARGE SCALE ANALYSIS]</scope>
    <source>
        <tissue>Cervix carcinoma</tissue>
        <tissue>Erythroleukemia</tissue>
    </source>
</reference>
<reference key="14">
    <citation type="journal article" date="2015" name="Mol. Cell">
        <title>Analysis of the histone H3.1 interactome: a suitable chaperone for the right event.</title>
        <authorList>
            <person name="Campos E.I."/>
            <person name="Smits A.H."/>
            <person name="Kang Y.H."/>
            <person name="Landry S."/>
            <person name="Escobar T.M."/>
            <person name="Nayak S."/>
            <person name="Ueberheide B.M."/>
            <person name="Durocher D."/>
            <person name="Vermeulen M."/>
            <person name="Hurwitz J."/>
            <person name="Reinberg D."/>
        </authorList>
    </citation>
    <scope>FUNCTION</scope>
    <scope>SUBCELLULAR LOCATION</scope>
    <scope>INTERACTION WITH MCM5</scope>
</reference>
<reference key="15">
    <citation type="journal article" date="2016" name="EMBO J.">
        <title>The MMS22L-TONSL heterodimer directly promotes RAD51-dependent recombination upon replication stress.</title>
        <authorList>
            <person name="Piwko W."/>
            <person name="Mlejnkova L.J."/>
            <person name="Mutreja K."/>
            <person name="Ranjha L."/>
            <person name="Stafa D."/>
            <person name="Smirnov A."/>
            <person name="Brodersen M.M."/>
            <person name="Zellweger R."/>
            <person name="Sturzenegger A."/>
            <person name="Janscak P."/>
            <person name="Lopes M."/>
            <person name="Peter M."/>
            <person name="Cejka P."/>
        </authorList>
    </citation>
    <scope>FUNCTION</scope>
</reference>
<reference key="16">
    <citation type="journal article" date="2018" name="Mol. Cell">
        <title>The histone chaperones ASF1 and CAF-1 promote MMS22L-TONSL-mediated Rad51 loading onto ssDNA during homologous recombination in human cells.</title>
        <authorList>
            <person name="Huang T.H."/>
            <person name="Fowler F."/>
            <person name="Chen C.C."/>
            <person name="Shen Z.J."/>
            <person name="Sleckman B."/>
            <person name="Tyler J.K."/>
        </authorList>
    </citation>
    <scope>FUNCTION</scope>
    <scope>SUBCELLULAR LOCATION</scope>
</reference>
<reference key="17">
    <citation type="journal article" date="2021" name="Mol. Cell">
        <title>DNAJC9 integrates heat shock molecular chaperones into the histone chaperone network.</title>
        <authorList>
            <person name="Hammond C.M."/>
            <person name="Bao H."/>
            <person name="Hendriks I.A."/>
            <person name="Carraro M."/>
            <person name="Garcia-Nieto A."/>
            <person name="Liu Y."/>
            <person name="Reveron-Gomez N."/>
            <person name="Spanos C."/>
            <person name="Chen L."/>
            <person name="Rappsilber J."/>
            <person name="Nielsen M.L."/>
            <person name="Patel D.J."/>
            <person name="Huang H."/>
            <person name="Groth A."/>
        </authorList>
    </citation>
    <scope>INTERACTION WITH DNJC9; H3.1 AND H3.1T</scope>
</reference>
<reference evidence="25" key="18">
    <citation type="journal article" date="2016" name="Nature">
        <title>H4K20me0 marks post-replicative chromatin and recruits the TONSL-MMS22L DNA repair complex.</title>
        <authorList>
            <person name="Saredi G."/>
            <person name="Huang H."/>
            <person name="Hammond C.M."/>
            <person name="Alabert C."/>
            <person name="Bekker-Jensen S."/>
            <person name="Forne I."/>
            <person name="Reveron-Gomez N."/>
            <person name="Foster B.M."/>
            <person name="Mlejnkova L."/>
            <person name="Bartke T."/>
            <person name="Cejka P."/>
            <person name="Mailand N."/>
            <person name="Imhof A."/>
            <person name="Patel D.J."/>
            <person name="Groth A."/>
        </authorList>
    </citation>
    <scope>X-RAY CRYSTALLOGRAPHY (2.42 ANGSTROMS) OF 512-692 IN COMPLEX WITH HISTONE H4</scope>
    <scope>FUNCTION</scope>
    <scope>SUBCELLULAR LOCATION</scope>
    <scope>INTERACTION WITH HISTONE H4K20ME0</scope>
    <scope>IDENTIFICATION IN THE MMS22L-TONSL COMPLEX</scope>
    <scope>MUTAGENESIS OF GLU-530; ASP-559; TRP-563; GLU-568; ASN-571 AND ASP-604</scope>
</reference>
<reference key="19">
    <citation type="journal article" date="2019" name="Am. J. Hum. Genet.">
        <title>Bi-allelic variants in TONSL cause sponastrime dysplasia and a spectrum of skeletal dysplasia phenotypes.</title>
        <authorList>
            <consortium name="University of Washington Center for Mendelian Genomics"/>
            <consortium name="Undiagnosed Diseases Network"/>
            <person name="Burrage L.C."/>
            <person name="Reynolds J.J."/>
            <person name="Baratang N.V."/>
            <person name="Phillips J.B."/>
            <person name="Wegner J."/>
            <person name="McFarquhar A."/>
            <person name="Higgs M.R."/>
            <person name="Christiansen A.E."/>
            <person name="Lanza D.G."/>
            <person name="Seavitt J.R."/>
            <person name="Jain M."/>
            <person name="Li X."/>
            <person name="Parry D.A."/>
            <person name="Raman V."/>
            <person name="Chitayat D."/>
            <person name="Chinn I.K."/>
            <person name="Bertuch A.A."/>
            <person name="Karaviti L."/>
            <person name="Schlesinger A.E."/>
            <person name="Earl D."/>
            <person name="Bamshad M."/>
            <person name="Savarirayan R."/>
            <person name="Doddapaneni H."/>
            <person name="Muzny D."/>
            <person name="Jhangiani S.N."/>
            <person name="Eng C.M."/>
            <person name="Gibbs R.A."/>
            <person name="Bi W."/>
            <person name="Emrick L."/>
            <person name="Rosenfeld J.A."/>
            <person name="Postlethwait J."/>
            <person name="Westerfield M."/>
            <person name="Dickinson M.E."/>
            <person name="Beaudet A.L."/>
            <person name="Ranza E."/>
            <person name="Huber C."/>
            <person name="Cormier-Daire V."/>
            <person name="Shen W."/>
            <person name="Mao R."/>
            <person name="Heaney J.D."/>
            <person name="Orange J.S."/>
            <person name="Bertola D."/>
            <person name="Yamamoto G.L."/>
            <person name="Baratela W.A.R."/>
            <person name="Butler M.G."/>
            <person name="Ali A."/>
            <person name="Adeli M."/>
            <person name="Cohn D.H."/>
            <person name="Krakow D."/>
            <person name="Jackson A.P."/>
            <person name="Lees M."/>
            <person name="Offiah A.C."/>
            <person name="Carlston C.M."/>
            <person name="Carey J.C."/>
            <person name="Stewart G.S."/>
            <person name="Bacino C.A."/>
            <person name="Campeau P.M."/>
            <person name="Lee B."/>
        </authorList>
    </citation>
    <scope>VARIANTS SEMDSP 110-TRP--LEU-1378 DEL; 154-GLN--LEU-1378 DEL; LYS-199; LYS-487; LYS-494; LEU-613; MET-653; 713-GLN--LEU-1378 DEL; 803-GLN--LEU-1378 DEL; TRP-934 AND PRO-1197</scope>
    <scope>INVOLVEMENT IN SEMDSP</scope>
</reference>
<reference key="20">
    <citation type="journal article" date="2019" name="Am. J. Hum. Genet.">
        <title>Hypomorphic mutations in TONSL cause sponastrime dysplasia.</title>
        <authorList>
            <person name="Chang H.R."/>
            <person name="Cho S.Y."/>
            <person name="Lee J.H."/>
            <person name="Lee E."/>
            <person name="Seo J."/>
            <person name="Lee H.R."/>
            <person name="Cavalcanti D.P."/>
            <person name="Maekitie O."/>
            <person name="Valta H."/>
            <person name="Girisha K.M."/>
            <person name="Lee C."/>
            <person name="Neethukrishna K."/>
            <person name="Bhavani G.S."/>
            <person name="Shukla A."/>
            <person name="Nampoothiri S."/>
            <person name="Phadke S.R."/>
            <person name="Park M.J."/>
            <person name="Ikegawa S."/>
            <person name="Wang Z."/>
            <person name="Higgs M.R."/>
            <person name="Stewart G.S."/>
            <person name="Jung E."/>
            <person name="Lee M.S."/>
            <person name="Park J.H."/>
            <person name="Lee E.A."/>
            <person name="Kim H."/>
            <person name="Myung K."/>
            <person name="Jeon W."/>
            <person name="Lee K."/>
            <person name="Kim D."/>
            <person name="Kim O.H."/>
            <person name="Choi M."/>
            <person name="Lee H.W."/>
            <person name="Kim Y."/>
            <person name="Cho T.J."/>
        </authorList>
    </citation>
    <scope>INVOLVEMENT IN SEMDSP</scope>
    <scope>FUNCTION</scope>
    <scope>VARIANTS SEMDSP HIS-42; ASN-174; HIS-364; LYS-487; 511-GLN--LEU-1378 DEL; LYS-539; GLN-558; TRP-934; 969-TYR--LEU-1378 DEL; ARG-973 AND GLN-1288</scope>
    <scope>CHARACTERIZATION OF VARIANTS SEMDSP ASN-174; HIS-364; LYS-539; GLN-558; TRP-934 AND ARG-973</scope>
</reference>
<reference key="21">
    <citation type="journal article" date="2020" name="Hum. Mol. Genet.">
        <title>Novel TONSL variants cause SPONASTRIME dysplasia and associate with spontaneous chromosome breaks, defective cell proliferation and apoptosis.</title>
        <authorList>
            <person name="Micale L."/>
            <person name="Cialfi S."/>
            <person name="Fusco C."/>
            <person name="Cinque L."/>
            <person name="Castellana S."/>
            <person name="Biagini T."/>
            <person name="Talora C."/>
            <person name="Notarangelo A."/>
            <person name="Bisceglia L."/>
            <person name="Taruscio D."/>
            <person name="Salvatore M."/>
            <person name="Castori M."/>
        </authorList>
    </citation>
    <scope>VARIANTS SEMDSP ARG-430 AND ARG-1090</scope>
</reference>
<keyword id="KW-0002">3D-structure</keyword>
<keyword id="KW-0025">Alternative splicing</keyword>
<keyword id="KW-0040">ANK repeat</keyword>
<keyword id="KW-0156">Chromatin regulator</keyword>
<keyword id="KW-0158">Chromosome</keyword>
<keyword id="KW-0963">Cytoplasm</keyword>
<keyword id="KW-0225">Disease variant</keyword>
<keyword id="KW-0227">DNA damage</keyword>
<keyword id="KW-0234">DNA repair</keyword>
<keyword id="KW-0242">Dwarfism</keyword>
<keyword id="KW-0433">Leucine-rich repeat</keyword>
<keyword id="KW-0488">Methylation</keyword>
<keyword id="KW-0539">Nucleus</keyword>
<keyword id="KW-0597">Phosphoprotein</keyword>
<keyword id="KW-1267">Proteomics identification</keyword>
<keyword id="KW-1185">Reference proteome</keyword>
<keyword id="KW-0677">Repeat</keyword>
<keyword id="KW-0802">TPR repeat</keyword>
<dbReference type="EMBL" id="U16258">
    <property type="protein sequence ID" value="AAA85819.1"/>
    <property type="status" value="ALT_FRAME"/>
    <property type="molecule type" value="mRNA"/>
</dbReference>
<dbReference type="EMBL" id="AC084125">
    <property type="status" value="NOT_ANNOTATED_CDS"/>
    <property type="molecule type" value="Genomic_DNA"/>
</dbReference>
<dbReference type="EMBL" id="AF205589">
    <property type="status" value="NOT_ANNOTATED_CDS"/>
    <property type="molecule type" value="Genomic_DNA"/>
</dbReference>
<dbReference type="EMBL" id="BC008782">
    <property type="protein sequence ID" value="AAH08782.1"/>
    <property type="status" value="ALT_INIT"/>
    <property type="molecule type" value="mRNA"/>
</dbReference>
<dbReference type="EMBL" id="AJ249601">
    <property type="protein sequence ID" value="CAB63467.1"/>
    <property type="status" value="ALT_SEQ"/>
    <property type="molecule type" value="Genomic_DNA"/>
</dbReference>
<dbReference type="CCDS" id="CCDS34968.2">
    <molecule id="Q96HA7-1"/>
</dbReference>
<dbReference type="PIR" id="A56429">
    <property type="entry name" value="A56429"/>
</dbReference>
<dbReference type="RefSeq" id="NP_038460.4">
    <molecule id="Q96HA7-1"/>
    <property type="nucleotide sequence ID" value="NM_013432.4"/>
</dbReference>
<dbReference type="PDB" id="5JA4">
    <property type="method" value="X-ray"/>
    <property type="resolution" value="2.42 A"/>
    <property type="chains" value="D=512-692"/>
</dbReference>
<dbReference type="PDBsum" id="5JA4"/>
<dbReference type="SMR" id="Q96HA7"/>
<dbReference type="BioGRID" id="110863">
    <property type="interactions" value="114"/>
</dbReference>
<dbReference type="CORUM" id="Q96HA7"/>
<dbReference type="FunCoup" id="Q96HA7">
    <property type="interactions" value="1467"/>
</dbReference>
<dbReference type="IntAct" id="Q96HA7">
    <property type="interactions" value="60"/>
</dbReference>
<dbReference type="MINT" id="Q96HA7"/>
<dbReference type="STRING" id="9606.ENSP00000386239"/>
<dbReference type="GlyGen" id="Q96HA7">
    <property type="glycosylation" value="5 sites, 1 O-linked glycan (5 sites)"/>
</dbReference>
<dbReference type="iPTMnet" id="Q96HA7"/>
<dbReference type="MetOSite" id="Q96HA7"/>
<dbReference type="PhosphoSitePlus" id="Q96HA7"/>
<dbReference type="BioMuta" id="TONSL"/>
<dbReference type="DMDM" id="182662416"/>
<dbReference type="jPOST" id="Q96HA7"/>
<dbReference type="MassIVE" id="Q96HA7"/>
<dbReference type="PaxDb" id="9606-ENSP00000386239"/>
<dbReference type="PeptideAtlas" id="Q96HA7"/>
<dbReference type="ProteomicsDB" id="76723">
    <molecule id="Q96HA7-1"/>
</dbReference>
<dbReference type="ProteomicsDB" id="76724">
    <molecule id="Q96HA7-2"/>
</dbReference>
<dbReference type="Pumba" id="Q96HA7"/>
<dbReference type="Antibodypedia" id="14893">
    <property type="antibodies" value="197 antibodies from 21 providers"/>
</dbReference>
<dbReference type="DNASU" id="4796"/>
<dbReference type="Ensembl" id="ENST00000409379.8">
    <molecule id="Q96HA7-1"/>
    <property type="protein sequence ID" value="ENSP00000386239.3"/>
    <property type="gene ID" value="ENSG00000160949.18"/>
</dbReference>
<dbReference type="GeneID" id="4796"/>
<dbReference type="KEGG" id="hsa:4796"/>
<dbReference type="MANE-Select" id="ENST00000409379.8">
    <property type="protein sequence ID" value="ENSP00000386239.3"/>
    <property type="RefSeq nucleotide sequence ID" value="NM_013432.5"/>
    <property type="RefSeq protein sequence ID" value="NP_038460.4"/>
</dbReference>
<dbReference type="UCSC" id="uc011llg.3">
    <molecule id="Q96HA7-1"/>
    <property type="organism name" value="human"/>
</dbReference>
<dbReference type="AGR" id="HGNC:7801"/>
<dbReference type="CTD" id="4796"/>
<dbReference type="DisGeNET" id="4796"/>
<dbReference type="GeneCards" id="TONSL"/>
<dbReference type="HGNC" id="HGNC:7801">
    <property type="gene designation" value="TONSL"/>
</dbReference>
<dbReference type="HPA" id="ENSG00000160949">
    <property type="expression patterns" value="Tissue enhanced (bone)"/>
</dbReference>
<dbReference type="MalaCards" id="TONSL"/>
<dbReference type="MIM" id="271510">
    <property type="type" value="phenotype"/>
</dbReference>
<dbReference type="MIM" id="604546">
    <property type="type" value="gene"/>
</dbReference>
<dbReference type="neXtProt" id="NX_Q96HA7"/>
<dbReference type="OpenTargets" id="ENSG00000160949"/>
<dbReference type="Orphanet" id="93357">
    <property type="disease" value="SPONASTRIME dysplasia"/>
</dbReference>
<dbReference type="PharmGKB" id="PA31605"/>
<dbReference type="VEuPathDB" id="HostDB:ENSG00000160949"/>
<dbReference type="eggNOG" id="KOG0504">
    <property type="taxonomic scope" value="Eukaryota"/>
</dbReference>
<dbReference type="eggNOG" id="KOG4308">
    <property type="taxonomic scope" value="Eukaryota"/>
</dbReference>
<dbReference type="GeneTree" id="ENSGT00940000160188"/>
<dbReference type="HOGENOM" id="CLU_002128_0_0_1"/>
<dbReference type="InParanoid" id="Q96HA7"/>
<dbReference type="OMA" id="ITQHLAK"/>
<dbReference type="OrthoDB" id="5806726at2759"/>
<dbReference type="PAN-GO" id="Q96HA7">
    <property type="GO annotations" value="3 GO annotations based on evolutionary models"/>
</dbReference>
<dbReference type="PhylomeDB" id="Q96HA7"/>
<dbReference type="TreeFam" id="TF326440"/>
<dbReference type="PathwayCommons" id="Q96HA7"/>
<dbReference type="SignaLink" id="Q96HA7"/>
<dbReference type="BioGRID-ORCS" id="4796">
    <property type="hits" value="813 hits in 1170 CRISPR screens"/>
</dbReference>
<dbReference type="ChiTaRS" id="TONSL">
    <property type="organism name" value="human"/>
</dbReference>
<dbReference type="GenomeRNAi" id="4796"/>
<dbReference type="Pharos" id="Q96HA7">
    <property type="development level" value="Tbio"/>
</dbReference>
<dbReference type="PRO" id="PR:Q96HA7"/>
<dbReference type="Proteomes" id="UP000005640">
    <property type="component" value="Chromosome 8"/>
</dbReference>
<dbReference type="RNAct" id="Q96HA7">
    <property type="molecule type" value="protein"/>
</dbReference>
<dbReference type="Bgee" id="ENSG00000160949">
    <property type="expression patterns" value="Expressed in mucosa of transverse colon and 95 other cell types or tissues"/>
</dbReference>
<dbReference type="ExpressionAtlas" id="Q96HA7">
    <property type="expression patterns" value="baseline and differential"/>
</dbReference>
<dbReference type="GO" id="GO:0005737">
    <property type="term" value="C:cytoplasm"/>
    <property type="evidence" value="ECO:0000304"/>
    <property type="project" value="ProtInc"/>
</dbReference>
<dbReference type="GO" id="GO:0016604">
    <property type="term" value="C:nuclear body"/>
    <property type="evidence" value="ECO:0000314"/>
    <property type="project" value="HPA"/>
</dbReference>
<dbReference type="GO" id="GO:0043596">
    <property type="term" value="C:nuclear replication fork"/>
    <property type="evidence" value="ECO:0000314"/>
    <property type="project" value="UniProtKB"/>
</dbReference>
<dbReference type="GO" id="GO:0005654">
    <property type="term" value="C:nucleoplasm"/>
    <property type="evidence" value="ECO:0000314"/>
    <property type="project" value="HPA"/>
</dbReference>
<dbReference type="GO" id="GO:0035861">
    <property type="term" value="C:site of double-strand break"/>
    <property type="evidence" value="ECO:0000314"/>
    <property type="project" value="UniProtKB"/>
</dbReference>
<dbReference type="GO" id="GO:0042393">
    <property type="term" value="F:histone binding"/>
    <property type="evidence" value="ECO:0000314"/>
    <property type="project" value="UniProtKB"/>
</dbReference>
<dbReference type="GO" id="GO:0140566">
    <property type="term" value="F:histone reader activity"/>
    <property type="evidence" value="ECO:0000314"/>
    <property type="project" value="UniProtKB"/>
</dbReference>
<dbReference type="GO" id="GO:0000724">
    <property type="term" value="P:double-strand break repair via homologous recombination"/>
    <property type="evidence" value="ECO:0000314"/>
    <property type="project" value="UniProtKB"/>
</dbReference>
<dbReference type="GO" id="GO:0071168">
    <property type="term" value="P:protein localization to chromatin"/>
    <property type="evidence" value="ECO:0000314"/>
    <property type="project" value="UniProt"/>
</dbReference>
<dbReference type="GO" id="GO:0031297">
    <property type="term" value="P:replication fork processing"/>
    <property type="evidence" value="ECO:0000314"/>
    <property type="project" value="UniProt"/>
</dbReference>
<dbReference type="FunFam" id="1.25.40.10:FF:001196">
    <property type="entry name" value="Tonsoku like, DNA repair protein"/>
    <property type="match status" value="1"/>
</dbReference>
<dbReference type="FunFam" id="1.25.40.20:FF:000151">
    <property type="entry name" value="Tonsoku like, DNA repair protein"/>
    <property type="match status" value="1"/>
</dbReference>
<dbReference type="FunFam" id="3.80.10.10:FF:000329">
    <property type="entry name" value="Tonsoku like, DNA repair protein"/>
    <property type="match status" value="1"/>
</dbReference>
<dbReference type="FunFam" id="3.80.10.10:FF:000377">
    <property type="entry name" value="Tonsoku like, DNA repair protein"/>
    <property type="match status" value="1"/>
</dbReference>
<dbReference type="FunFam" id="3.80.10.10:FF:000509">
    <property type="entry name" value="Tonsoku like, DNA repair protein"/>
    <property type="match status" value="1"/>
</dbReference>
<dbReference type="FunFam" id="1.25.40.10:FF:000297">
    <property type="entry name" value="tonsoku-like protein isoform X2"/>
    <property type="match status" value="1"/>
</dbReference>
<dbReference type="Gene3D" id="1.25.40.20">
    <property type="entry name" value="Ankyrin repeat-containing domain"/>
    <property type="match status" value="1"/>
</dbReference>
<dbReference type="Gene3D" id="3.80.10.10">
    <property type="entry name" value="Ribonuclease Inhibitor"/>
    <property type="match status" value="3"/>
</dbReference>
<dbReference type="Gene3D" id="1.25.40.10">
    <property type="entry name" value="Tetratricopeptide repeat domain"/>
    <property type="match status" value="2"/>
</dbReference>
<dbReference type="InterPro" id="IPR002110">
    <property type="entry name" value="Ankyrin_rpt"/>
</dbReference>
<dbReference type="InterPro" id="IPR036770">
    <property type="entry name" value="Ankyrin_rpt-contain_sf"/>
</dbReference>
<dbReference type="InterPro" id="IPR001611">
    <property type="entry name" value="Leu-rich_rpt"/>
</dbReference>
<dbReference type="InterPro" id="IPR032675">
    <property type="entry name" value="LRR_dom_sf"/>
</dbReference>
<dbReference type="InterPro" id="IPR052311">
    <property type="entry name" value="MMS22L-TONSL_complex_comp"/>
</dbReference>
<dbReference type="InterPro" id="IPR011990">
    <property type="entry name" value="TPR-like_helical_dom_sf"/>
</dbReference>
<dbReference type="InterPro" id="IPR019734">
    <property type="entry name" value="TPR_rpt"/>
</dbReference>
<dbReference type="PANTHER" id="PTHR46358">
    <property type="entry name" value="TONSOKU-LIKE PROTEIN"/>
    <property type="match status" value="1"/>
</dbReference>
<dbReference type="PANTHER" id="PTHR46358:SF1">
    <property type="entry name" value="TONSOKU-LIKE PROTEIN"/>
    <property type="match status" value="1"/>
</dbReference>
<dbReference type="Pfam" id="PF12796">
    <property type="entry name" value="Ank_2"/>
    <property type="match status" value="1"/>
</dbReference>
<dbReference type="Pfam" id="PF13516">
    <property type="entry name" value="LRR_6"/>
    <property type="match status" value="2"/>
</dbReference>
<dbReference type="Pfam" id="PF13181">
    <property type="entry name" value="TPR_8"/>
    <property type="match status" value="1"/>
</dbReference>
<dbReference type="PRINTS" id="PR01415">
    <property type="entry name" value="ANKYRIN"/>
</dbReference>
<dbReference type="SMART" id="SM00248">
    <property type="entry name" value="ANK"/>
    <property type="match status" value="3"/>
</dbReference>
<dbReference type="SMART" id="SM00368">
    <property type="entry name" value="LRR_RI"/>
    <property type="match status" value="5"/>
</dbReference>
<dbReference type="SMART" id="SM00028">
    <property type="entry name" value="TPR"/>
    <property type="match status" value="7"/>
</dbReference>
<dbReference type="SUPFAM" id="SSF48403">
    <property type="entry name" value="Ankyrin repeat"/>
    <property type="match status" value="1"/>
</dbReference>
<dbReference type="SUPFAM" id="SSF52047">
    <property type="entry name" value="RNI-like"/>
    <property type="match status" value="1"/>
</dbReference>
<dbReference type="SUPFAM" id="SSF48452">
    <property type="entry name" value="TPR-like"/>
    <property type="match status" value="3"/>
</dbReference>
<dbReference type="PROSITE" id="PS50297">
    <property type="entry name" value="ANK_REP_REGION"/>
    <property type="match status" value="1"/>
</dbReference>
<dbReference type="PROSITE" id="PS50088">
    <property type="entry name" value="ANK_REPEAT"/>
    <property type="match status" value="3"/>
</dbReference>
<dbReference type="PROSITE" id="PS50293">
    <property type="entry name" value="TPR_REGION"/>
    <property type="match status" value="2"/>
</dbReference>
<sequence length="1378" mass="150929">MSLERELRQLSKAKAKAQRAGQRREEAALCHQLGELLAGHGRYAEALEQHWQELQLRERADDPLGCAVAHRKIGERLAEMEDYPAALQHQHQYLELAHSLRNHTELQRAWATIGRTHLDIYDHCQSRDALLQAQAAFEKSLAIVDEELEGTLAQGELNEMRTRLYLNLGLTFESLQQTALCNDYFRKSIFLAEQNHLYEDLFRARYNLGTIHWRAGQHSQAMRCLEGARECAHTMRKRFMESECCVVIAQVLQDLGDFLAAKRALKKAYRLGSQKPVQRAAICQNLQHVLAVVRLQQQLEEAEGRDPQGAMVICEQLGDLFSKAGDFPRAAEAYQKQLRFAELLDRPGAERAIIHVSLATTLGDMKDHHGAVRHYEEELRLRSGNVLEEAKTWLNIALSREEAGDAYELLAPCFQKALSCAQQAQRPQLQRQVLQHLHTVQLRLQPQEAPETETRLRELSVAEDEDEEEEAEEAAATAESEALEAGEVELSEGEDDTDGLTPQLEEDEELQGHLGRRKGSKWNRRNDMGETLLHRACIEGQLRRVQDLVRQGHPLNPRDYCGWTPLHEACNYGHLEIVRFLLDHGAAVDDPGGQGCEGITPLHDALNCGHFEVAELLLERGASVTLRTRKGLSPLETLQQWVKLYRRDLDLETRQKARAMEMLLQAAASGQDPHSSQAFHTPSSLLFDPETSPPLSPCPEPPSNSTRLPEASQAHVRVSPGQAAPAMARPRRSRHGPASSSSSSEGEDSAGPARPSQKRPRCSATAQRVAAWTPGPASNREAATASTSRAAYQAAIRGVGSAQSRLGPGPPRGHSKALAPQAALIPEEECLAGDWLELDMPLTRSRRPRPRGTGDNRRPSSTSGSDSEESRPRARAKQVRLTCMQSCSAPVNAGPSSLASEPPGSPSTPRVSEPSGDSSAAGQPLGPAPPPPIRVRVQVQDHLFLIPVPHSSDTHSVAWLAEQAAQRYYQTCGLLPRLTLRKEGALLAPQDLIPDVLQSNDEVLAEVTSWDLPPLTDRYRRACQSLGQGEHQQVLQAVELQGLGLSFSACSLALDQAQLTPLLRALKLHTALRELRLAGNRLGDKCVAELVAALGTMPSLALLDLSSNHLGPEGLRQLAMGLPGQATLQSLEELDLSMNPLGDGCGQSLASLLHACPLLSTLRLQACGFGPSFFLSHQTALGSAFQDAEHLKTLSLSYNALGAPALARTLQSLPAGTLLHLELSSVAAGKGDSDLMEPVFRYLAKEGCALAHLTLSANHLGDKAVRDLCRCLSLCPSLISLDLSANPEISCASLEELLSTLQKRPQGLSFLGLSGCAVQGPLGLGLWDKIAAQLRELQLCSRRLCAEDRDALRQLQPSRPGPGECTLDHGSKLFFRRL</sequence>
<feature type="chain" id="PRO_0000326634" description="Tonsoku-like protein">
    <location>
        <begin position="1"/>
        <end position="1378"/>
    </location>
</feature>
<feature type="repeat" description="TPR 1">
    <location>
        <begin position="27"/>
        <end position="60"/>
    </location>
</feature>
<feature type="repeat" description="TPR 2">
    <location>
        <begin position="67"/>
        <end position="100"/>
    </location>
</feature>
<feature type="repeat" description="TPR 3">
    <location>
        <begin position="107"/>
        <end position="147"/>
    </location>
</feature>
<feature type="repeat" description="TPR 4">
    <location>
        <begin position="162"/>
        <end position="195"/>
    </location>
</feature>
<feature type="repeat" description="TPR 5">
    <location>
        <begin position="202"/>
        <end position="235"/>
    </location>
</feature>
<feature type="repeat" description="TPR 6">
    <location>
        <begin position="242"/>
        <end position="275"/>
    </location>
</feature>
<feature type="repeat" description="TPR 7">
    <location>
        <begin position="311"/>
        <end position="344"/>
    </location>
</feature>
<feature type="repeat" description="TPR 8">
    <location>
        <begin position="352"/>
        <end position="385"/>
    </location>
</feature>
<feature type="repeat" description="ANK 1">
    <location>
        <begin position="528"/>
        <end position="557"/>
    </location>
</feature>
<feature type="repeat" description="ANK 2">
    <location>
        <begin position="561"/>
        <end position="590"/>
    </location>
</feature>
<feature type="repeat" description="ANK 3">
    <location>
        <begin position="597"/>
        <end position="626"/>
    </location>
</feature>
<feature type="repeat" description="LRR 1">
    <location>
        <begin position="1069"/>
        <end position="1093"/>
    </location>
</feature>
<feature type="repeat" description="LRR 2">
    <location>
        <begin position="1097"/>
        <end position="1122"/>
    </location>
</feature>
<feature type="repeat" description="LRR 3">
    <location>
        <begin position="1128"/>
        <end position="1151"/>
    </location>
</feature>
<feature type="repeat" description="LRR 4">
    <location>
        <begin position="1188"/>
        <end position="1212"/>
    </location>
</feature>
<feature type="repeat" description="LRR 5">
    <location>
        <begin position="1247"/>
        <end position="1270"/>
    </location>
</feature>
<feature type="repeat" description="LRR 6">
    <location>
        <begin position="1275"/>
        <end position="1300"/>
    </location>
</feature>
<feature type="repeat" description="LRR 7">
    <location>
        <begin position="1331"/>
        <end position="1354"/>
    </location>
</feature>
<feature type="region of interest" description="Disordered" evidence="2">
    <location>
        <begin position="475"/>
        <end position="524"/>
    </location>
</feature>
<feature type="region of interest" description="Disordered" evidence="2">
    <location>
        <begin position="667"/>
        <end position="789"/>
    </location>
</feature>
<feature type="region of interest" description="Disordered" evidence="2">
    <location>
        <begin position="842"/>
        <end position="933"/>
    </location>
</feature>
<feature type="compositionally biased region" description="Acidic residues" evidence="2">
    <location>
        <begin position="481"/>
        <end position="509"/>
    </location>
</feature>
<feature type="compositionally biased region" description="Basic residues" evidence="2">
    <location>
        <begin position="514"/>
        <end position="523"/>
    </location>
</feature>
<feature type="compositionally biased region" description="Polar residues" evidence="2">
    <location>
        <begin position="672"/>
        <end position="684"/>
    </location>
</feature>
<feature type="compositionally biased region" description="Pro residues" evidence="2">
    <location>
        <begin position="691"/>
        <end position="702"/>
    </location>
</feature>
<feature type="compositionally biased region" description="Low complexity" evidence="2">
    <location>
        <begin position="736"/>
        <end position="753"/>
    </location>
</feature>
<feature type="compositionally biased region" description="Low complexity" evidence="2">
    <location>
        <begin position="777"/>
        <end position="789"/>
    </location>
</feature>
<feature type="compositionally biased region" description="Polar residues" evidence="2">
    <location>
        <begin position="883"/>
        <end position="899"/>
    </location>
</feature>
<feature type="compositionally biased region" description="Polar residues" evidence="2">
    <location>
        <begin position="907"/>
        <end position="918"/>
    </location>
</feature>
<feature type="modified residue" description="Phosphoserine" evidence="26 27 28">
    <location>
        <position position="719"/>
    </location>
</feature>
<feature type="modified residue" description="Omega-N-methylarginine" evidence="1">
    <location>
        <position position="797"/>
    </location>
</feature>
<feature type="splice variant" id="VSP_032686" description="In isoform 2." evidence="20">
    <original>GLSPLETLQQW</original>
    <variation>ASARWRRCSSG</variation>
    <location>
        <begin position="631"/>
        <end position="641"/>
    </location>
</feature>
<feature type="sequence variant" id="VAR_083007" description="In SEMDSP; uncertain significance; dbSNP:rs778155094." evidence="14">
    <original>R</original>
    <variation>H</variation>
    <location>
        <position position="42"/>
    </location>
</feature>
<feature type="sequence variant" id="VAR_083008" description="In SEMDSP; disease phenotype includes immunologic and hematologic abnormalities." evidence="13">
    <location>
        <begin position="110"/>
        <end position="1378"/>
    </location>
</feature>
<feature type="sequence variant" id="VAR_083009" description="In SEMDSP." evidence="13">
    <location>
        <begin position="154"/>
        <end position="1378"/>
    </location>
</feature>
<feature type="sequence variant" id="VAR_083010" description="In SEMDSP; decreased function in double-strand break repair via homologous recombination; dbSNP:rs1188878572." evidence="14">
    <original>S</original>
    <variation>N</variation>
    <location>
        <position position="174"/>
    </location>
</feature>
<feature type="sequence variant" id="VAR_083011" description="In SEMDSP; disease phenotype includes immunologic and hematologic abnormalities; dbSNP:rs1335783881." evidence="13">
    <original>E</original>
    <variation>K</variation>
    <location>
        <position position="199"/>
    </location>
</feature>
<feature type="sequence variant" id="VAR_083012" description="In SEMDSP; uncertain significance; decreased function in double-strand break repair via homologous recombination." evidence="14">
    <original>D</original>
    <variation>H</variation>
    <location>
        <position position="364"/>
    </location>
</feature>
<feature type="sequence variant" id="VAR_086303" description="In SEMDSP; uncertain significance; dbSNP:rs776042221." evidence="15">
    <original>Q</original>
    <variation>R</variation>
    <location>
        <position position="430"/>
    </location>
</feature>
<feature type="sequence variant" id="VAR_083013" description="In SEMDSP; uncertain significance; dbSNP:rs563710728." evidence="13 14">
    <original>E</original>
    <variation>K</variation>
    <location>
        <position position="487"/>
    </location>
</feature>
<feature type="sequence variant" id="VAR_042411" description="In dbSNP:rs2229314.">
    <original>V</original>
    <variation>M</variation>
    <location>
        <position position="488"/>
    </location>
</feature>
<feature type="sequence variant" id="VAR_042412" description="In dbSNP:rs2229315." evidence="3 17">
    <original>G</original>
    <variation>S</variation>
    <location>
        <position position="493"/>
    </location>
</feature>
<feature type="sequence variant" id="VAR_083014" description="In SEMDSP; uncertain significance; dbSNP:rs775551492." evidence="13">
    <original>E</original>
    <variation>K</variation>
    <location>
        <position position="494"/>
    </location>
</feature>
<feature type="sequence variant" id="VAR_083015" description="In SEMDSP." evidence="14">
    <location>
        <begin position="511"/>
        <end position="1378"/>
    </location>
</feature>
<feature type="sequence variant" id="VAR_083016" description="In SEMDSP; decreased function in double-strand break repair via homologous recombination; dbSNP:rs370196996." evidence="14">
    <original>E</original>
    <variation>K</variation>
    <location>
        <position position="539"/>
    </location>
</feature>
<feature type="sequence variant" id="VAR_083017" description="In SEMDSP; decreased function in double-strand break repair via homologous recombination; decreased protein amount in patient cells; dbSNP:rs777654833." evidence="14">
    <original>R</original>
    <variation>Q</variation>
    <location>
        <position position="558"/>
    </location>
</feature>
<feature type="sequence variant" id="VAR_083018" description="In SEMDSP; uncertain significance; dbSNP:rs778625348." evidence="13">
    <original>V</original>
    <variation>L</variation>
    <location>
        <position position="613"/>
    </location>
</feature>
<feature type="sequence variant" id="VAR_083019" description="In SEMDSP; disease phenotype includes primary aphakia and absent pupils; dbSNP:rs755055463." evidence="13">
    <original>T</original>
    <variation>M</variation>
    <location>
        <position position="653"/>
    </location>
</feature>
<feature type="sequence variant" id="VAR_083020" description="In SEMDSP; disease phenotype includes primary aphakia and absent pupils." evidence="13">
    <location>
        <begin position="713"/>
        <end position="1378"/>
    </location>
</feature>
<feature type="sequence variant" id="VAR_042413" description="In dbSNP:rs7830832." evidence="4">
    <original>A</original>
    <variation>V</variation>
    <location>
        <position position="714"/>
    </location>
</feature>
<feature type="sequence variant" id="VAR_083021" description="In SEMDSP." evidence="13">
    <location>
        <begin position="803"/>
        <end position="1378"/>
    </location>
</feature>
<feature type="sequence variant" id="VAR_083022" description="In SEMDSP; decreased function in double-strand break repair via homologous recombination; dbSNP:rs755575416." evidence="13 14">
    <original>R</original>
    <variation>W</variation>
    <location>
        <position position="934"/>
    </location>
</feature>
<feature type="sequence variant" id="VAR_083023" description="In SEMDSP." evidence="14">
    <location>
        <begin position="969"/>
        <end position="1378"/>
    </location>
</feature>
<feature type="sequence variant" id="VAR_083024" description="In SEMDSP; decreased function in double-strand break repair via homologous recombination; dbSNP:rs1342198195." evidence="14">
    <original>G</original>
    <variation>R</variation>
    <location>
        <position position="973"/>
    </location>
</feature>
<feature type="sequence variant" id="VAR_086304" description="In SEMDSP; uncertain significance; dbSNP:rs137933176." evidence="15">
    <original>L</original>
    <variation>R</variation>
    <location>
        <position position="1090"/>
    </location>
</feature>
<feature type="sequence variant" id="VAR_083025" description="In SEMDSP; dbSNP:rs1586681982." evidence="13">
    <original>S</original>
    <variation>P</variation>
    <location>
        <position position="1197"/>
    </location>
</feature>
<feature type="sequence variant" id="VAR_042414" description="In dbSNP:rs4925856.">
    <original>P</original>
    <variation>L</variation>
    <location>
        <position position="1276"/>
    </location>
</feature>
<feature type="sequence variant" id="VAR_083026" description="In SEMDSP; uncertain significance; dbSNP:rs1554878402." evidence="14">
    <original>E</original>
    <variation>Q</variation>
    <location>
        <position position="1288"/>
    </location>
</feature>
<feature type="mutagenesis site" description="Abolished interaction with histone H4 and recruitment to replication forks without affecting interaction with MMS22L." evidence="10">
    <original>E</original>
    <variation>A</variation>
    <location>
        <position position="530"/>
    </location>
</feature>
<feature type="mutagenesis site" description="Abolished interaction with histone H4 and recruitment to replication forks without affecting interaction with MMS22L." evidence="10">
    <original>D</original>
    <variation>A</variation>
    <location>
        <position position="559"/>
    </location>
</feature>
<feature type="mutagenesis site" description="Abolished interaction with histone H4 and recruitment to replication forks without affecting interaction with MMS22L." evidence="10">
    <original>W</original>
    <variation>A</variation>
    <location>
        <position position="563"/>
    </location>
</feature>
<feature type="mutagenesis site" description="Abolished interaction with histone H4 and recruitment to replication forks without affecting interaction with MMS22L." evidence="10">
    <original>E</original>
    <variation>A</variation>
    <location>
        <position position="568"/>
    </location>
</feature>
<feature type="mutagenesis site" description="Abolished interaction with histone H4 and recruitment to replication forks without affecting interaction with MMS22L." evidence="10">
    <original>N</original>
    <variation>A</variation>
    <location>
        <position position="571"/>
    </location>
</feature>
<feature type="mutagenesis site" description="Abolished interaction with histone H4 and recruitment to replication forks without affecting interaction with MMS22L." evidence="10">
    <original>D</original>
    <variation>A</variation>
    <location>
        <position position="604"/>
    </location>
</feature>
<feature type="sequence conflict" description="In Ref. 1; AAA85819." evidence="21" ref="1">
    <original>EQ</original>
    <variation>DE</variation>
    <location>
        <begin position="193"/>
        <end position="194"/>
    </location>
</feature>
<feature type="sequence conflict" description="In Ref. 1; AAA85819." evidence="21" ref="1">
    <original>A</original>
    <variation>R</variation>
    <location>
        <position position="268"/>
    </location>
</feature>
<feature type="sequence conflict" description="In Ref. 4; CAB63467." evidence="21" ref="4">
    <original>P</original>
    <variation>A</variation>
    <location>
        <position position="427"/>
    </location>
</feature>
<feature type="sequence conflict" description="In Ref. 1; AAA85819." evidence="21" ref="1">
    <original>A</original>
    <variation>R</variation>
    <location>
        <position position="482"/>
    </location>
</feature>
<feature type="sequence conflict" description="In Ref. 1; AAA85819." evidence="21" ref="1">
    <original>R</original>
    <variation>P</variation>
    <location>
        <position position="516"/>
    </location>
</feature>
<feature type="helix" evidence="29">
    <location>
        <begin position="532"/>
        <end position="539"/>
    </location>
</feature>
<feature type="helix" evidence="29">
    <location>
        <begin position="542"/>
        <end position="551"/>
    </location>
</feature>
<feature type="helix" evidence="29">
    <location>
        <begin position="565"/>
        <end position="572"/>
    </location>
</feature>
<feature type="helix" evidence="29">
    <location>
        <begin position="575"/>
        <end position="583"/>
    </location>
</feature>
<feature type="turn" evidence="29">
    <location>
        <begin position="594"/>
        <end position="597"/>
    </location>
</feature>
<feature type="helix" evidence="29">
    <location>
        <begin position="601"/>
        <end position="607"/>
    </location>
</feature>
<feature type="helix" evidence="29">
    <location>
        <begin position="611"/>
        <end position="616"/>
    </location>
</feature>
<feature type="helix" evidence="29">
    <location>
        <begin position="634"/>
        <end position="644"/>
    </location>
</feature>
<feature type="helix" evidence="29">
    <location>
        <begin position="651"/>
        <end position="668"/>
    </location>
</feature>
<evidence type="ECO:0000250" key="1">
    <source>
        <dbReference type="UniProtKB" id="Q6NZL6"/>
    </source>
</evidence>
<evidence type="ECO:0000256" key="2">
    <source>
        <dbReference type="SAM" id="MobiDB-lite"/>
    </source>
</evidence>
<evidence type="ECO:0000269" key="3">
    <source>
    </source>
</evidence>
<evidence type="ECO:0000269" key="4">
    <source>
    </source>
</evidence>
<evidence type="ECO:0000269" key="5">
    <source>
    </source>
</evidence>
<evidence type="ECO:0000269" key="6">
    <source>
    </source>
</evidence>
<evidence type="ECO:0000269" key="7">
    <source>
    </source>
</evidence>
<evidence type="ECO:0000269" key="8">
    <source>
    </source>
</evidence>
<evidence type="ECO:0000269" key="9">
    <source>
    </source>
</evidence>
<evidence type="ECO:0000269" key="10">
    <source>
    </source>
</evidence>
<evidence type="ECO:0000269" key="11">
    <source>
    </source>
</evidence>
<evidence type="ECO:0000269" key="12">
    <source>
    </source>
</evidence>
<evidence type="ECO:0000269" key="13">
    <source>
    </source>
</evidence>
<evidence type="ECO:0000269" key="14">
    <source>
    </source>
</evidence>
<evidence type="ECO:0000269" key="15">
    <source>
    </source>
</evidence>
<evidence type="ECO:0000269" key="16">
    <source>
    </source>
</evidence>
<evidence type="ECO:0000269" key="17">
    <source>
    </source>
</evidence>
<evidence type="ECO:0000269" key="18">
    <source>
    </source>
</evidence>
<evidence type="ECO:0000303" key="19">
    <source>
    </source>
</evidence>
<evidence type="ECO:0000303" key="20">
    <source>
    </source>
</evidence>
<evidence type="ECO:0000305" key="21"/>
<evidence type="ECO:0000305" key="22">
    <source>
    </source>
</evidence>
<evidence type="ECO:0000305" key="23">
    <source>
    </source>
</evidence>
<evidence type="ECO:0000312" key="24">
    <source>
        <dbReference type="HGNC" id="HGNC:7801"/>
    </source>
</evidence>
<evidence type="ECO:0007744" key="25">
    <source>
        <dbReference type="PDB" id="5JA4"/>
    </source>
</evidence>
<evidence type="ECO:0007744" key="26">
    <source>
    </source>
</evidence>
<evidence type="ECO:0007744" key="27">
    <source>
    </source>
</evidence>
<evidence type="ECO:0007744" key="28">
    <source>
    </source>
</evidence>
<evidence type="ECO:0007829" key="29">
    <source>
        <dbReference type="PDB" id="5JA4"/>
    </source>
</evidence>